<name>023R_FRG3G</name>
<protein>
    <recommendedName>
        <fullName>Uncharacterized protein 023R</fullName>
    </recommendedName>
</protein>
<sequence length="382" mass="42541">MRVSQTSWIVSRMLEYPRGGFFYSTDMACMMEGLAEELAGGHKDEVLIVSGRNGDDEVFKEFPNVRAADGLKGPNSIDPETKLVLIIDVSPTAISNALAATLQEFLIPVWVFCNHTRTLTASVTRRLGYKLWPKGTYTPYICEKAGVSEVVTYNQPESEKFVAFMSAARQIMDKRKSKKTMQELAFLPHLAFAEIAMEGDQEMTPTLTAKKVSDIKDEQVNELASAMFRTGKLSHLDMLSVPDCVYSCGEALKREVAKAKANRERFVVALRNAQYKKYTAGLLEAGTPVKTFTEVIKNWGAYDTIFLPMGVDWTYTGGSNLIRMMMTPGSHKTVTFVPESDDVHEFCHNKPTVNTMGVESAATGLAAELNRRWRRDNPVDAS</sequence>
<dbReference type="EMBL" id="AY548484">
    <property type="protein sequence ID" value="AAT09682.1"/>
    <property type="molecule type" value="Genomic_DNA"/>
</dbReference>
<dbReference type="RefSeq" id="YP_031601.1">
    <property type="nucleotide sequence ID" value="NC_005946.1"/>
</dbReference>
<dbReference type="KEGG" id="vg:2947743"/>
<dbReference type="Proteomes" id="UP000008770">
    <property type="component" value="Segment"/>
</dbReference>
<organism>
    <name type="scientific">Frog virus 3 (isolate Goorha)</name>
    <name type="common">FV-3</name>
    <dbReference type="NCBI Taxonomy" id="654924"/>
    <lineage>
        <taxon>Viruses</taxon>
        <taxon>Varidnaviria</taxon>
        <taxon>Bamfordvirae</taxon>
        <taxon>Nucleocytoviricota</taxon>
        <taxon>Megaviricetes</taxon>
        <taxon>Pimascovirales</taxon>
        <taxon>Iridoviridae</taxon>
        <taxon>Alphairidovirinae</taxon>
        <taxon>Ranavirus</taxon>
        <taxon>Frog virus 3</taxon>
    </lineage>
</organism>
<keyword id="KW-1185">Reference proteome</keyword>
<feature type="chain" id="PRO_0000410521" description="Uncharacterized protein 023R">
    <location>
        <begin position="1"/>
        <end position="382"/>
    </location>
</feature>
<gene>
    <name type="ORF">FV3-023R</name>
</gene>
<accession>Q6GZV2</accession>
<proteinExistence type="predicted"/>
<reference key="1">
    <citation type="journal article" date="2004" name="Virology">
        <title>Comparative genomic analyses of frog virus 3, type species of the genus Ranavirus (family Iridoviridae).</title>
        <authorList>
            <person name="Tan W.G."/>
            <person name="Barkman T.J."/>
            <person name="Gregory Chinchar V."/>
            <person name="Essani K."/>
        </authorList>
    </citation>
    <scope>NUCLEOTIDE SEQUENCE [LARGE SCALE GENOMIC DNA]</scope>
</reference>
<organismHost>
    <name type="scientific">Dryophytes versicolor</name>
    <name type="common">chameleon treefrog</name>
    <dbReference type="NCBI Taxonomy" id="30343"/>
</organismHost>
<organismHost>
    <name type="scientific">Lithobates pipiens</name>
    <name type="common">Northern leopard frog</name>
    <name type="synonym">Rana pipiens</name>
    <dbReference type="NCBI Taxonomy" id="8404"/>
</organismHost>
<organismHost>
    <name type="scientific">Lithobates sylvaticus</name>
    <name type="common">Wood frog</name>
    <name type="synonym">Rana sylvatica</name>
    <dbReference type="NCBI Taxonomy" id="45438"/>
</organismHost>
<organismHost>
    <name type="scientific">Notophthalmus viridescens</name>
    <name type="common">Eastern newt</name>
    <name type="synonym">Triturus viridescens</name>
    <dbReference type="NCBI Taxonomy" id="8316"/>
</organismHost>